<comment type="function">
    <text evidence="1">Catalyzes a trans-dehydration via an enolate intermediate.</text>
</comment>
<comment type="catalytic activity">
    <reaction evidence="1">
        <text>3-dehydroquinate = 3-dehydroshikimate + H2O</text>
        <dbReference type="Rhea" id="RHEA:21096"/>
        <dbReference type="ChEBI" id="CHEBI:15377"/>
        <dbReference type="ChEBI" id="CHEBI:16630"/>
        <dbReference type="ChEBI" id="CHEBI:32364"/>
        <dbReference type="EC" id="4.2.1.10"/>
    </reaction>
</comment>
<comment type="pathway">
    <text evidence="1">Metabolic intermediate biosynthesis; chorismate biosynthesis; chorismate from D-erythrose 4-phosphate and phosphoenolpyruvate: step 3/7.</text>
</comment>
<comment type="subunit">
    <text evidence="1">Homododecamer.</text>
</comment>
<comment type="similarity">
    <text evidence="1">Belongs to the type-II 3-dehydroquinase family.</text>
</comment>
<feature type="chain" id="PRO_0000159922" description="3-dehydroquinate dehydratase">
    <location>
        <begin position="1"/>
        <end position="150"/>
    </location>
</feature>
<feature type="active site" description="Proton acceptor" evidence="1">
    <location>
        <position position="23"/>
    </location>
</feature>
<feature type="active site" description="Proton donor" evidence="1">
    <location>
        <position position="101"/>
    </location>
</feature>
<feature type="binding site" evidence="1">
    <location>
        <position position="75"/>
    </location>
    <ligand>
        <name>substrate</name>
    </ligand>
</feature>
<feature type="binding site" evidence="1">
    <location>
        <position position="81"/>
    </location>
    <ligand>
        <name>substrate</name>
    </ligand>
</feature>
<feature type="binding site" evidence="1">
    <location>
        <position position="88"/>
    </location>
    <ligand>
        <name>substrate</name>
    </ligand>
</feature>
<feature type="binding site" evidence="1">
    <location>
        <begin position="102"/>
        <end position="103"/>
    </location>
    <ligand>
        <name>substrate</name>
    </ligand>
</feature>
<feature type="binding site" evidence="1">
    <location>
        <position position="112"/>
    </location>
    <ligand>
        <name>substrate</name>
    </ligand>
</feature>
<feature type="site" description="Transition state stabilizer" evidence="1">
    <location>
        <position position="18"/>
    </location>
</feature>
<proteinExistence type="inferred from homology"/>
<sequence>MATILVLHGPNLNLLGTREPGVYGTITLPQINQDLEQRARDAGHHLMYLQSNAEYELIDRIHAARGEGVDFILINPAAFTHTSVAIRDALMGVSIPFIEVHLSNVHKREPFRHHSYFSDVAVGVICGLGASGYRLALEAALEQLAASAKP</sequence>
<evidence type="ECO:0000255" key="1">
    <source>
        <dbReference type="HAMAP-Rule" id="MF_00169"/>
    </source>
</evidence>
<accession>Q87VS6</accession>
<gene>
    <name evidence="1" type="primary">aroQ</name>
    <name type="ordered locus">PSPTO_4859</name>
</gene>
<reference key="1">
    <citation type="journal article" date="2003" name="Proc. Natl. Acad. Sci. U.S.A.">
        <title>The complete genome sequence of the Arabidopsis and tomato pathogen Pseudomonas syringae pv. tomato DC3000.</title>
        <authorList>
            <person name="Buell C.R."/>
            <person name="Joardar V."/>
            <person name="Lindeberg M."/>
            <person name="Selengut J."/>
            <person name="Paulsen I.T."/>
            <person name="Gwinn M.L."/>
            <person name="Dodson R.J."/>
            <person name="DeBoy R.T."/>
            <person name="Durkin A.S."/>
            <person name="Kolonay J.F."/>
            <person name="Madupu R."/>
            <person name="Daugherty S.C."/>
            <person name="Brinkac L.M."/>
            <person name="Beanan M.J."/>
            <person name="Haft D.H."/>
            <person name="Nelson W.C."/>
            <person name="Davidsen T.M."/>
            <person name="Zafar N."/>
            <person name="Zhou L."/>
            <person name="Liu J."/>
            <person name="Yuan Q."/>
            <person name="Khouri H.M."/>
            <person name="Fedorova N.B."/>
            <person name="Tran B."/>
            <person name="Russell D."/>
            <person name="Berry K.J."/>
            <person name="Utterback T.R."/>
            <person name="Van Aken S.E."/>
            <person name="Feldblyum T.V."/>
            <person name="D'Ascenzo M."/>
            <person name="Deng W.-L."/>
            <person name="Ramos A.R."/>
            <person name="Alfano J.R."/>
            <person name="Cartinhour S."/>
            <person name="Chatterjee A.K."/>
            <person name="Delaney T.P."/>
            <person name="Lazarowitz S.G."/>
            <person name="Martin G.B."/>
            <person name="Schneider D.J."/>
            <person name="Tang X."/>
            <person name="Bender C.L."/>
            <person name="White O."/>
            <person name="Fraser C.M."/>
            <person name="Collmer A."/>
        </authorList>
    </citation>
    <scope>NUCLEOTIDE SEQUENCE [LARGE SCALE GENOMIC DNA]</scope>
    <source>
        <strain>ATCC BAA-871 / DC3000</strain>
    </source>
</reference>
<organism>
    <name type="scientific">Pseudomonas syringae pv. tomato (strain ATCC BAA-871 / DC3000)</name>
    <dbReference type="NCBI Taxonomy" id="223283"/>
    <lineage>
        <taxon>Bacteria</taxon>
        <taxon>Pseudomonadati</taxon>
        <taxon>Pseudomonadota</taxon>
        <taxon>Gammaproteobacteria</taxon>
        <taxon>Pseudomonadales</taxon>
        <taxon>Pseudomonadaceae</taxon>
        <taxon>Pseudomonas</taxon>
    </lineage>
</organism>
<name>AROQ_PSESM</name>
<dbReference type="EC" id="4.2.1.10" evidence="1"/>
<dbReference type="EMBL" id="AE016853">
    <property type="protein sequence ID" value="AAO58288.1"/>
    <property type="molecule type" value="Genomic_DNA"/>
</dbReference>
<dbReference type="RefSeq" id="NP_794593.1">
    <property type="nucleotide sequence ID" value="NC_004578.1"/>
</dbReference>
<dbReference type="RefSeq" id="WP_002555369.1">
    <property type="nucleotide sequence ID" value="NC_004578.1"/>
</dbReference>
<dbReference type="SMR" id="Q87VS6"/>
<dbReference type="STRING" id="223283.PSPTO_4859"/>
<dbReference type="GeneID" id="69861454"/>
<dbReference type="KEGG" id="pst:PSPTO_4859"/>
<dbReference type="PATRIC" id="fig|223283.9.peg.4971"/>
<dbReference type="eggNOG" id="COG0757">
    <property type="taxonomic scope" value="Bacteria"/>
</dbReference>
<dbReference type="HOGENOM" id="CLU_090968_1_0_6"/>
<dbReference type="OrthoDB" id="9790793at2"/>
<dbReference type="PhylomeDB" id="Q87VS6"/>
<dbReference type="UniPathway" id="UPA00053">
    <property type="reaction ID" value="UER00086"/>
</dbReference>
<dbReference type="Proteomes" id="UP000002515">
    <property type="component" value="Chromosome"/>
</dbReference>
<dbReference type="GO" id="GO:0003855">
    <property type="term" value="F:3-dehydroquinate dehydratase activity"/>
    <property type="evidence" value="ECO:0007669"/>
    <property type="project" value="UniProtKB-UniRule"/>
</dbReference>
<dbReference type="GO" id="GO:0008652">
    <property type="term" value="P:amino acid biosynthetic process"/>
    <property type="evidence" value="ECO:0007669"/>
    <property type="project" value="UniProtKB-KW"/>
</dbReference>
<dbReference type="GO" id="GO:0009073">
    <property type="term" value="P:aromatic amino acid family biosynthetic process"/>
    <property type="evidence" value="ECO:0007669"/>
    <property type="project" value="UniProtKB-KW"/>
</dbReference>
<dbReference type="GO" id="GO:0009423">
    <property type="term" value="P:chorismate biosynthetic process"/>
    <property type="evidence" value="ECO:0007669"/>
    <property type="project" value="UniProtKB-UniRule"/>
</dbReference>
<dbReference type="GO" id="GO:0019631">
    <property type="term" value="P:quinate catabolic process"/>
    <property type="evidence" value="ECO:0007669"/>
    <property type="project" value="TreeGrafter"/>
</dbReference>
<dbReference type="CDD" id="cd00466">
    <property type="entry name" value="DHQase_II"/>
    <property type="match status" value="1"/>
</dbReference>
<dbReference type="Gene3D" id="3.40.50.9100">
    <property type="entry name" value="Dehydroquinase, class II"/>
    <property type="match status" value="1"/>
</dbReference>
<dbReference type="HAMAP" id="MF_00169">
    <property type="entry name" value="AroQ"/>
    <property type="match status" value="1"/>
</dbReference>
<dbReference type="InterPro" id="IPR001874">
    <property type="entry name" value="DHquinase_II"/>
</dbReference>
<dbReference type="InterPro" id="IPR018509">
    <property type="entry name" value="DHquinase_II_CS"/>
</dbReference>
<dbReference type="InterPro" id="IPR036441">
    <property type="entry name" value="DHquinase_II_sf"/>
</dbReference>
<dbReference type="NCBIfam" id="TIGR01088">
    <property type="entry name" value="aroQ"/>
    <property type="match status" value="1"/>
</dbReference>
<dbReference type="NCBIfam" id="NF003804">
    <property type="entry name" value="PRK05395.1-1"/>
    <property type="match status" value="1"/>
</dbReference>
<dbReference type="NCBIfam" id="NF003805">
    <property type="entry name" value="PRK05395.1-2"/>
    <property type="match status" value="1"/>
</dbReference>
<dbReference type="NCBIfam" id="NF003806">
    <property type="entry name" value="PRK05395.1-3"/>
    <property type="match status" value="1"/>
</dbReference>
<dbReference type="NCBIfam" id="NF003807">
    <property type="entry name" value="PRK05395.1-4"/>
    <property type="match status" value="1"/>
</dbReference>
<dbReference type="PANTHER" id="PTHR21272">
    <property type="entry name" value="CATABOLIC 3-DEHYDROQUINASE"/>
    <property type="match status" value="1"/>
</dbReference>
<dbReference type="PANTHER" id="PTHR21272:SF3">
    <property type="entry name" value="CATABOLIC 3-DEHYDROQUINASE"/>
    <property type="match status" value="1"/>
</dbReference>
<dbReference type="Pfam" id="PF01220">
    <property type="entry name" value="DHquinase_II"/>
    <property type="match status" value="1"/>
</dbReference>
<dbReference type="PIRSF" id="PIRSF001399">
    <property type="entry name" value="DHquinase_II"/>
    <property type="match status" value="1"/>
</dbReference>
<dbReference type="SUPFAM" id="SSF52304">
    <property type="entry name" value="Type II 3-dehydroquinate dehydratase"/>
    <property type="match status" value="1"/>
</dbReference>
<dbReference type="PROSITE" id="PS01029">
    <property type="entry name" value="DEHYDROQUINASE_II"/>
    <property type="match status" value="1"/>
</dbReference>
<keyword id="KW-0028">Amino-acid biosynthesis</keyword>
<keyword id="KW-0057">Aromatic amino acid biosynthesis</keyword>
<keyword id="KW-0456">Lyase</keyword>
<keyword id="KW-1185">Reference proteome</keyword>
<protein>
    <recommendedName>
        <fullName evidence="1">3-dehydroquinate dehydratase</fullName>
        <shortName evidence="1">3-dehydroquinase</shortName>
        <ecNumber evidence="1">4.2.1.10</ecNumber>
    </recommendedName>
    <alternativeName>
        <fullName evidence="1">Type II DHQase</fullName>
    </alternativeName>
</protein>